<name>SDHB_EREGS</name>
<reference key="1">
    <citation type="journal article" date="2004" name="Science">
        <title>The Ashbya gossypii genome as a tool for mapping the ancient Saccharomyces cerevisiae genome.</title>
        <authorList>
            <person name="Dietrich F.S."/>
            <person name="Voegeli S."/>
            <person name="Brachat S."/>
            <person name="Lerch A."/>
            <person name="Gates K."/>
            <person name="Steiner S."/>
            <person name="Mohr C."/>
            <person name="Poehlmann R."/>
            <person name="Luedi P."/>
            <person name="Choi S."/>
            <person name="Wing R.A."/>
            <person name="Flavier A."/>
            <person name="Gaffney T.D."/>
            <person name="Philippsen P."/>
        </authorList>
    </citation>
    <scope>NUCLEOTIDE SEQUENCE [LARGE SCALE GENOMIC DNA]</scope>
    <source>
        <strain>ATCC 10895 / CBS 109.51 / FGSC 9923 / NRRL Y-1056</strain>
    </source>
</reference>
<reference key="2">
    <citation type="journal article" date="2013" name="G3 (Bethesda)">
        <title>Genomes of Ashbya fungi isolated from insects reveal four mating-type loci, numerous translocations, lack of transposons, and distinct gene duplications.</title>
        <authorList>
            <person name="Dietrich F.S."/>
            <person name="Voegeli S."/>
            <person name="Kuo S."/>
            <person name="Philippsen P."/>
        </authorList>
    </citation>
    <scope>GENOME REANNOTATION</scope>
    <source>
        <strain>ATCC 10895 / CBS 109.51 / FGSC 9923 / NRRL Y-1056</strain>
    </source>
</reference>
<sequence>MVFRAGIGRIGLIRGLATQAAEVSATRYKSFKIYRWNPDTPAEKPRMQEYKVDLNKCGPMVLDALIKIKNEQDPTLTFRRSCREGICGSCAMNIGGRNTLACLCKIDQAENKDVKIYPLPHMYVVKDLVPDLTNFYKQYKSIQPYLQKASKPADGREHLQSIADRKKLDGLYECILCACCSTACPSYWWNNEQYLGPAVLMQAYRWMVDSRDGAGAGRREQLQNAMSVYRCHTIMNCTRTCPKGLNPGKAIAEIKKALAFA</sequence>
<gene>
    <name type="primary">SDH2</name>
    <name type="ordered locus">ACL065C</name>
</gene>
<dbReference type="EC" id="1.3.5.1"/>
<dbReference type="EMBL" id="AE016816">
    <property type="protein sequence ID" value="AAS51163.1"/>
    <property type="molecule type" value="Genomic_DNA"/>
</dbReference>
<dbReference type="RefSeq" id="NP_983339.1">
    <property type="nucleotide sequence ID" value="NM_208692.1"/>
</dbReference>
<dbReference type="SMR" id="Q75CI4"/>
<dbReference type="FunCoup" id="Q75CI4">
    <property type="interactions" value="738"/>
</dbReference>
<dbReference type="STRING" id="284811.Q75CI4"/>
<dbReference type="EnsemblFungi" id="AAS51163">
    <property type="protein sequence ID" value="AAS51163"/>
    <property type="gene ID" value="AGOS_ACL065C"/>
</dbReference>
<dbReference type="GeneID" id="4619459"/>
<dbReference type="KEGG" id="ago:AGOS_ACL065C"/>
<dbReference type="eggNOG" id="KOG3049">
    <property type="taxonomic scope" value="Eukaryota"/>
</dbReference>
<dbReference type="HOGENOM" id="CLU_044838_0_2_1"/>
<dbReference type="InParanoid" id="Q75CI4"/>
<dbReference type="OMA" id="DGQYFGP"/>
<dbReference type="OrthoDB" id="1696654at2759"/>
<dbReference type="UniPathway" id="UPA00223">
    <property type="reaction ID" value="UER01006"/>
</dbReference>
<dbReference type="Proteomes" id="UP000000591">
    <property type="component" value="Chromosome III"/>
</dbReference>
<dbReference type="GO" id="GO:0005743">
    <property type="term" value="C:mitochondrial inner membrane"/>
    <property type="evidence" value="ECO:0007669"/>
    <property type="project" value="UniProtKB-SubCell"/>
</dbReference>
<dbReference type="GO" id="GO:0031966">
    <property type="term" value="C:mitochondrial membrane"/>
    <property type="evidence" value="ECO:0000318"/>
    <property type="project" value="GO_Central"/>
</dbReference>
<dbReference type="GO" id="GO:0045273">
    <property type="term" value="C:respiratory chain complex II (succinate dehydrogenase)"/>
    <property type="evidence" value="ECO:0007669"/>
    <property type="project" value="EnsemblFungi"/>
</dbReference>
<dbReference type="GO" id="GO:0051537">
    <property type="term" value="F:2 iron, 2 sulfur cluster binding"/>
    <property type="evidence" value="ECO:0007669"/>
    <property type="project" value="UniProtKB-KW"/>
</dbReference>
<dbReference type="GO" id="GO:0051538">
    <property type="term" value="F:3 iron, 4 sulfur cluster binding"/>
    <property type="evidence" value="ECO:0007669"/>
    <property type="project" value="UniProtKB-KW"/>
</dbReference>
<dbReference type="GO" id="GO:0051539">
    <property type="term" value="F:4 iron, 4 sulfur cluster binding"/>
    <property type="evidence" value="ECO:0007669"/>
    <property type="project" value="UniProtKB-KW"/>
</dbReference>
<dbReference type="GO" id="GO:0009055">
    <property type="term" value="F:electron transfer activity"/>
    <property type="evidence" value="ECO:0007669"/>
    <property type="project" value="InterPro"/>
</dbReference>
<dbReference type="GO" id="GO:0046872">
    <property type="term" value="F:metal ion binding"/>
    <property type="evidence" value="ECO:0007669"/>
    <property type="project" value="UniProtKB-KW"/>
</dbReference>
<dbReference type="GO" id="GO:0008177">
    <property type="term" value="F:succinate dehydrogenase (quinone) activity"/>
    <property type="evidence" value="ECO:0007669"/>
    <property type="project" value="UniProtKB-EC"/>
</dbReference>
<dbReference type="GO" id="GO:0009060">
    <property type="term" value="P:aerobic respiration"/>
    <property type="evidence" value="ECO:0000318"/>
    <property type="project" value="GO_Central"/>
</dbReference>
<dbReference type="GO" id="GO:0006121">
    <property type="term" value="P:mitochondrial electron transport, succinate to ubiquinone"/>
    <property type="evidence" value="ECO:0007669"/>
    <property type="project" value="EnsemblFungi"/>
</dbReference>
<dbReference type="GO" id="GO:0022904">
    <property type="term" value="P:respiratory electron transport chain"/>
    <property type="evidence" value="ECO:0000318"/>
    <property type="project" value="GO_Central"/>
</dbReference>
<dbReference type="GO" id="GO:0006099">
    <property type="term" value="P:tricarboxylic acid cycle"/>
    <property type="evidence" value="ECO:0007669"/>
    <property type="project" value="UniProtKB-UniPathway"/>
</dbReference>
<dbReference type="FunFam" id="3.10.20.30:FF:000007">
    <property type="entry name" value="Succinate dehydrogenase [ubiquinone] iron-sulfur subunit, mitochondrial"/>
    <property type="match status" value="1"/>
</dbReference>
<dbReference type="FunFam" id="1.10.1060.10:FF:000001">
    <property type="entry name" value="Succinate dehydrogenase iron-sulfur subunit SdhB"/>
    <property type="match status" value="1"/>
</dbReference>
<dbReference type="Gene3D" id="3.10.20.30">
    <property type="match status" value="1"/>
</dbReference>
<dbReference type="Gene3D" id="1.10.1060.10">
    <property type="entry name" value="Alpha-helical ferredoxin"/>
    <property type="match status" value="1"/>
</dbReference>
<dbReference type="InterPro" id="IPR036010">
    <property type="entry name" value="2Fe-2S_ferredoxin-like_sf"/>
</dbReference>
<dbReference type="InterPro" id="IPR001041">
    <property type="entry name" value="2Fe-2S_ferredoxin-type"/>
</dbReference>
<dbReference type="InterPro" id="IPR006058">
    <property type="entry name" value="2Fe2S_fd_BS"/>
</dbReference>
<dbReference type="InterPro" id="IPR017896">
    <property type="entry name" value="4Fe4S_Fe-S-bd"/>
</dbReference>
<dbReference type="InterPro" id="IPR017900">
    <property type="entry name" value="4Fe4S_Fe_S_CS"/>
</dbReference>
<dbReference type="InterPro" id="IPR012675">
    <property type="entry name" value="Beta-grasp_dom_sf"/>
</dbReference>
<dbReference type="InterPro" id="IPR009051">
    <property type="entry name" value="Helical_ferredxn"/>
</dbReference>
<dbReference type="InterPro" id="IPR050573">
    <property type="entry name" value="SDH/FRD_Iron-Sulfur"/>
</dbReference>
<dbReference type="InterPro" id="IPR004489">
    <property type="entry name" value="Succ_DH/fum_Rdtase_Fe-S"/>
</dbReference>
<dbReference type="InterPro" id="IPR025192">
    <property type="entry name" value="Succ_DH/fum_Rdtase_N"/>
</dbReference>
<dbReference type="NCBIfam" id="TIGR00384">
    <property type="entry name" value="dhsB"/>
    <property type="match status" value="1"/>
</dbReference>
<dbReference type="NCBIfam" id="NF004616">
    <property type="entry name" value="PRK05950.1"/>
    <property type="match status" value="1"/>
</dbReference>
<dbReference type="PANTHER" id="PTHR11921:SF29">
    <property type="entry name" value="SUCCINATE DEHYDROGENASE [UBIQUINONE] IRON-SULFUR SUBUNIT, MITOCHONDRIAL"/>
    <property type="match status" value="1"/>
</dbReference>
<dbReference type="PANTHER" id="PTHR11921">
    <property type="entry name" value="SUCCINATE DEHYDROGENASE IRON-SULFUR PROTEIN"/>
    <property type="match status" value="1"/>
</dbReference>
<dbReference type="Pfam" id="PF13085">
    <property type="entry name" value="Fer2_3"/>
    <property type="match status" value="1"/>
</dbReference>
<dbReference type="Pfam" id="PF13534">
    <property type="entry name" value="Fer4_17"/>
    <property type="match status" value="1"/>
</dbReference>
<dbReference type="SUPFAM" id="SSF54292">
    <property type="entry name" value="2Fe-2S ferredoxin-like"/>
    <property type="match status" value="1"/>
</dbReference>
<dbReference type="SUPFAM" id="SSF46548">
    <property type="entry name" value="alpha-helical ferredoxin"/>
    <property type="match status" value="1"/>
</dbReference>
<dbReference type="PROSITE" id="PS00197">
    <property type="entry name" value="2FE2S_FER_1"/>
    <property type="match status" value="1"/>
</dbReference>
<dbReference type="PROSITE" id="PS51085">
    <property type="entry name" value="2FE2S_FER_2"/>
    <property type="match status" value="1"/>
</dbReference>
<dbReference type="PROSITE" id="PS00198">
    <property type="entry name" value="4FE4S_FER_1"/>
    <property type="match status" value="1"/>
</dbReference>
<dbReference type="PROSITE" id="PS51379">
    <property type="entry name" value="4FE4S_FER_2"/>
    <property type="match status" value="1"/>
</dbReference>
<comment type="function">
    <text evidence="1">Iron-sulfur protein (IP) subunit of succinate dehydrogenase (SDH) that is involved in complex II of the mitochondrial electron transport chain and is responsible for transferring electrons from succinate to ubiquinone (coenzyme Q).</text>
</comment>
<comment type="catalytic activity">
    <reaction>
        <text>a quinone + succinate = fumarate + a quinol</text>
        <dbReference type="Rhea" id="RHEA:40523"/>
        <dbReference type="ChEBI" id="CHEBI:24646"/>
        <dbReference type="ChEBI" id="CHEBI:29806"/>
        <dbReference type="ChEBI" id="CHEBI:30031"/>
        <dbReference type="ChEBI" id="CHEBI:132124"/>
        <dbReference type="EC" id="1.3.5.1"/>
    </reaction>
</comment>
<comment type="cofactor">
    <cofactor evidence="1">
        <name>[2Fe-2S] cluster</name>
        <dbReference type="ChEBI" id="CHEBI:190135"/>
    </cofactor>
    <text evidence="1">Binds 1 [2Fe-2S] cluster.</text>
</comment>
<comment type="cofactor">
    <cofactor evidence="1">
        <name>[3Fe-4S] cluster</name>
        <dbReference type="ChEBI" id="CHEBI:21137"/>
    </cofactor>
    <text evidence="1">Binds 1 [3Fe-4S] cluster.</text>
</comment>
<comment type="cofactor">
    <cofactor evidence="1">
        <name>[4Fe-4S] cluster</name>
        <dbReference type="ChEBI" id="CHEBI:49883"/>
    </cofactor>
    <text evidence="1">Binds 1 [4Fe-4S] cluster.</text>
</comment>
<comment type="pathway">
    <text>Carbohydrate metabolism; tricarboxylic acid cycle; fumarate from succinate (eukaryal route): step 1/1.</text>
</comment>
<comment type="subunit">
    <text evidence="1">Component of complex II composed of four subunits: a flavoprotein (FP), an iron-sulfur protein (IP), and a cytochrome b composed of a large and a small subunit.</text>
</comment>
<comment type="subcellular location">
    <subcellularLocation>
        <location evidence="1">Mitochondrion inner membrane</location>
        <topology evidence="1">Peripheral membrane protein</topology>
        <orientation evidence="1">Matrix side</orientation>
    </subcellularLocation>
</comment>
<comment type="similarity">
    <text evidence="4">Belongs to the succinate dehydrogenase/fumarate reductase iron-sulfur protein family.</text>
</comment>
<accession>Q75CI4</accession>
<organism>
    <name type="scientific">Eremothecium gossypii (strain ATCC 10895 / CBS 109.51 / FGSC 9923 / NRRL Y-1056)</name>
    <name type="common">Yeast</name>
    <name type="synonym">Ashbya gossypii</name>
    <dbReference type="NCBI Taxonomy" id="284811"/>
    <lineage>
        <taxon>Eukaryota</taxon>
        <taxon>Fungi</taxon>
        <taxon>Dikarya</taxon>
        <taxon>Ascomycota</taxon>
        <taxon>Saccharomycotina</taxon>
        <taxon>Saccharomycetes</taxon>
        <taxon>Saccharomycetales</taxon>
        <taxon>Saccharomycetaceae</taxon>
        <taxon>Eremothecium</taxon>
    </lineage>
</organism>
<keyword id="KW-0001">2Fe-2S</keyword>
<keyword id="KW-0003">3Fe-4S</keyword>
<keyword id="KW-0004">4Fe-4S</keyword>
<keyword id="KW-0249">Electron transport</keyword>
<keyword id="KW-0408">Iron</keyword>
<keyword id="KW-0411">Iron-sulfur</keyword>
<keyword id="KW-0472">Membrane</keyword>
<keyword id="KW-0479">Metal-binding</keyword>
<keyword id="KW-0496">Mitochondrion</keyword>
<keyword id="KW-0999">Mitochondrion inner membrane</keyword>
<keyword id="KW-0560">Oxidoreductase</keyword>
<keyword id="KW-1185">Reference proteome</keyword>
<keyword id="KW-0809">Transit peptide</keyword>
<keyword id="KW-0813">Transport</keyword>
<keyword id="KW-0816">Tricarboxylic acid cycle</keyword>
<protein>
    <recommendedName>
        <fullName>Succinate dehydrogenase [ubiquinone] iron-sulfur subunit, mitochondrial</fullName>
        <ecNumber>1.3.5.1</ecNumber>
    </recommendedName>
    <alternativeName>
        <fullName>Iron-sulfur subunit of complex II</fullName>
        <shortName>Ip</shortName>
    </alternativeName>
</protein>
<evidence type="ECO:0000250" key="1"/>
<evidence type="ECO:0000255" key="2">
    <source>
        <dbReference type="PROSITE-ProRule" id="PRU00465"/>
    </source>
</evidence>
<evidence type="ECO:0000255" key="3">
    <source>
        <dbReference type="PROSITE-ProRule" id="PRU00711"/>
    </source>
</evidence>
<evidence type="ECO:0000305" key="4"/>
<proteinExistence type="inferred from homology"/>
<feature type="transit peptide" description="Mitochondrion">
    <location>
        <begin position="1"/>
        <end status="unknown"/>
    </location>
</feature>
<feature type="chain" id="PRO_0000010347" description="Succinate dehydrogenase [ubiquinone] iron-sulfur subunit, mitochondrial">
    <location>
        <begin status="unknown"/>
        <end position="261"/>
    </location>
</feature>
<feature type="domain" description="2Fe-2S ferredoxin-type" evidence="2">
    <location>
        <begin position="31"/>
        <end position="122"/>
    </location>
</feature>
<feature type="domain" description="4Fe-4S ferredoxin-type" evidence="3">
    <location>
        <begin position="164"/>
        <end position="194"/>
    </location>
</feature>
<feature type="binding site" evidence="1">
    <location>
        <position position="82"/>
    </location>
    <ligand>
        <name>[2Fe-2S] cluster</name>
        <dbReference type="ChEBI" id="CHEBI:190135"/>
    </ligand>
</feature>
<feature type="binding site" evidence="1">
    <location>
        <position position="87"/>
    </location>
    <ligand>
        <name>[2Fe-2S] cluster</name>
        <dbReference type="ChEBI" id="CHEBI:190135"/>
    </ligand>
</feature>
<feature type="binding site" evidence="1">
    <location>
        <position position="90"/>
    </location>
    <ligand>
        <name>[2Fe-2S] cluster</name>
        <dbReference type="ChEBI" id="CHEBI:190135"/>
    </ligand>
</feature>
<feature type="binding site" evidence="1">
    <location>
        <position position="102"/>
    </location>
    <ligand>
        <name>[2Fe-2S] cluster</name>
        <dbReference type="ChEBI" id="CHEBI:190135"/>
    </ligand>
</feature>
<feature type="binding site" evidence="1">
    <location>
        <position position="174"/>
    </location>
    <ligand>
        <name>[4Fe-4S] cluster</name>
        <dbReference type="ChEBI" id="CHEBI:49883"/>
    </ligand>
</feature>
<feature type="binding site" evidence="1">
    <location>
        <position position="177"/>
    </location>
    <ligand>
        <name>[4Fe-4S] cluster</name>
        <dbReference type="ChEBI" id="CHEBI:49883"/>
    </ligand>
</feature>
<feature type="binding site" evidence="1">
    <location>
        <position position="180"/>
    </location>
    <ligand>
        <name>[4Fe-4S] cluster</name>
        <dbReference type="ChEBI" id="CHEBI:49883"/>
    </ligand>
</feature>
<feature type="binding site" evidence="1">
    <location>
        <position position="184"/>
    </location>
    <ligand>
        <name>[3Fe-4S] cluster</name>
        <dbReference type="ChEBI" id="CHEBI:21137"/>
    </ligand>
</feature>
<feature type="binding site" evidence="1">
    <location>
        <position position="189"/>
    </location>
    <ligand>
        <name>a ubiquinone</name>
        <dbReference type="ChEBI" id="CHEBI:16389"/>
        <note>ligand shared with DHSD</note>
    </ligand>
</feature>
<feature type="binding site" evidence="1">
    <location>
        <position position="231"/>
    </location>
    <ligand>
        <name>[3Fe-4S] cluster</name>
        <dbReference type="ChEBI" id="CHEBI:21137"/>
    </ligand>
</feature>
<feature type="binding site" evidence="1">
    <location>
        <position position="237"/>
    </location>
    <ligand>
        <name>[3Fe-4S] cluster</name>
        <dbReference type="ChEBI" id="CHEBI:21137"/>
    </ligand>
</feature>
<feature type="binding site" evidence="1">
    <location>
        <position position="241"/>
    </location>
    <ligand>
        <name>[4Fe-4S] cluster</name>
        <dbReference type="ChEBI" id="CHEBI:49883"/>
    </ligand>
</feature>